<comment type="function">
    <text evidence="1">Produces ATP from ADP in the presence of a proton gradient across the membrane. The catalytic sites are hosted primarily by the beta subunits.</text>
</comment>
<comment type="catalytic activity">
    <reaction evidence="1">
        <text>ATP + H2O + 4 H(+)(in) = ADP + phosphate + 5 H(+)(out)</text>
        <dbReference type="Rhea" id="RHEA:57720"/>
        <dbReference type="ChEBI" id="CHEBI:15377"/>
        <dbReference type="ChEBI" id="CHEBI:15378"/>
        <dbReference type="ChEBI" id="CHEBI:30616"/>
        <dbReference type="ChEBI" id="CHEBI:43474"/>
        <dbReference type="ChEBI" id="CHEBI:456216"/>
        <dbReference type="EC" id="7.1.2.2"/>
    </reaction>
</comment>
<comment type="subunit">
    <text evidence="1">F-type ATPases have 2 components, CF(1) - the catalytic core - and CF(0) - the membrane proton channel. CF(1) has five subunits: alpha(3), beta(3), gamma(1), delta(1), epsilon(1). CF(0) has three main subunits: a(1), b(2) and c(9-12). The alpha and beta chains form an alternating ring which encloses part of the gamma chain. CF(1) is attached to CF(0) by a central stalk formed by the gamma and epsilon chains, while a peripheral stalk is formed by the delta and b chains.</text>
</comment>
<comment type="subcellular location">
    <subcellularLocation>
        <location evidence="1">Cell inner membrane</location>
        <topology evidence="1">Peripheral membrane protein</topology>
    </subcellularLocation>
</comment>
<comment type="similarity">
    <text evidence="1">Belongs to the ATPase alpha/beta chains family.</text>
</comment>
<organism>
    <name type="scientific">Serratia proteamaculans (strain 568)</name>
    <dbReference type="NCBI Taxonomy" id="399741"/>
    <lineage>
        <taxon>Bacteria</taxon>
        <taxon>Pseudomonadati</taxon>
        <taxon>Pseudomonadota</taxon>
        <taxon>Gammaproteobacteria</taxon>
        <taxon>Enterobacterales</taxon>
        <taxon>Yersiniaceae</taxon>
        <taxon>Serratia</taxon>
    </lineage>
</organism>
<dbReference type="EC" id="7.1.2.2" evidence="1"/>
<dbReference type="EMBL" id="CP000826">
    <property type="protein sequence ID" value="ABV39118.1"/>
    <property type="molecule type" value="Genomic_DNA"/>
</dbReference>
<dbReference type="SMR" id="A8G7M8"/>
<dbReference type="STRING" id="399741.Spro_0008"/>
<dbReference type="KEGG" id="spe:Spro_0008"/>
<dbReference type="eggNOG" id="COG0055">
    <property type="taxonomic scope" value="Bacteria"/>
</dbReference>
<dbReference type="HOGENOM" id="CLU_022398_0_2_6"/>
<dbReference type="OrthoDB" id="9801639at2"/>
<dbReference type="GO" id="GO:0005886">
    <property type="term" value="C:plasma membrane"/>
    <property type="evidence" value="ECO:0007669"/>
    <property type="project" value="UniProtKB-SubCell"/>
</dbReference>
<dbReference type="GO" id="GO:0045259">
    <property type="term" value="C:proton-transporting ATP synthase complex"/>
    <property type="evidence" value="ECO:0007669"/>
    <property type="project" value="UniProtKB-KW"/>
</dbReference>
<dbReference type="GO" id="GO:0005524">
    <property type="term" value="F:ATP binding"/>
    <property type="evidence" value="ECO:0007669"/>
    <property type="project" value="UniProtKB-UniRule"/>
</dbReference>
<dbReference type="GO" id="GO:0016887">
    <property type="term" value="F:ATP hydrolysis activity"/>
    <property type="evidence" value="ECO:0007669"/>
    <property type="project" value="InterPro"/>
</dbReference>
<dbReference type="GO" id="GO:0046933">
    <property type="term" value="F:proton-transporting ATP synthase activity, rotational mechanism"/>
    <property type="evidence" value="ECO:0007669"/>
    <property type="project" value="UniProtKB-UniRule"/>
</dbReference>
<dbReference type="CDD" id="cd18110">
    <property type="entry name" value="ATP-synt_F1_beta_C"/>
    <property type="match status" value="1"/>
</dbReference>
<dbReference type="CDD" id="cd18115">
    <property type="entry name" value="ATP-synt_F1_beta_N"/>
    <property type="match status" value="1"/>
</dbReference>
<dbReference type="CDD" id="cd01133">
    <property type="entry name" value="F1-ATPase_beta_CD"/>
    <property type="match status" value="1"/>
</dbReference>
<dbReference type="FunFam" id="1.10.1140.10:FF:000001">
    <property type="entry name" value="ATP synthase subunit beta"/>
    <property type="match status" value="1"/>
</dbReference>
<dbReference type="FunFam" id="2.40.10.170:FF:000003">
    <property type="entry name" value="ATP synthase subunit beta"/>
    <property type="match status" value="1"/>
</dbReference>
<dbReference type="FunFam" id="3.40.50.300:FF:000004">
    <property type="entry name" value="ATP synthase subunit beta"/>
    <property type="match status" value="1"/>
</dbReference>
<dbReference type="Gene3D" id="2.40.10.170">
    <property type="match status" value="1"/>
</dbReference>
<dbReference type="Gene3D" id="1.10.1140.10">
    <property type="entry name" value="Bovine Mitochondrial F1-atpase, Atp Synthase Beta Chain, Chain D, domain 3"/>
    <property type="match status" value="1"/>
</dbReference>
<dbReference type="Gene3D" id="3.40.50.300">
    <property type="entry name" value="P-loop containing nucleotide triphosphate hydrolases"/>
    <property type="match status" value="1"/>
</dbReference>
<dbReference type="HAMAP" id="MF_01347">
    <property type="entry name" value="ATP_synth_beta_bact"/>
    <property type="match status" value="1"/>
</dbReference>
<dbReference type="InterPro" id="IPR003593">
    <property type="entry name" value="AAA+_ATPase"/>
</dbReference>
<dbReference type="InterPro" id="IPR055190">
    <property type="entry name" value="ATP-synt_VA_C"/>
</dbReference>
<dbReference type="InterPro" id="IPR005722">
    <property type="entry name" value="ATP_synth_F1_bsu"/>
</dbReference>
<dbReference type="InterPro" id="IPR020003">
    <property type="entry name" value="ATPase_a/bsu_AS"/>
</dbReference>
<dbReference type="InterPro" id="IPR050053">
    <property type="entry name" value="ATPase_alpha/beta_chains"/>
</dbReference>
<dbReference type="InterPro" id="IPR004100">
    <property type="entry name" value="ATPase_F1/V1/A1_a/bsu_N"/>
</dbReference>
<dbReference type="InterPro" id="IPR036121">
    <property type="entry name" value="ATPase_F1/V1/A1_a/bsu_N_sf"/>
</dbReference>
<dbReference type="InterPro" id="IPR000194">
    <property type="entry name" value="ATPase_F1/V1/A1_a/bsu_nucl-bd"/>
</dbReference>
<dbReference type="InterPro" id="IPR024034">
    <property type="entry name" value="ATPase_F1/V1_b/a_C"/>
</dbReference>
<dbReference type="InterPro" id="IPR027417">
    <property type="entry name" value="P-loop_NTPase"/>
</dbReference>
<dbReference type="NCBIfam" id="TIGR01039">
    <property type="entry name" value="atpD"/>
    <property type="match status" value="1"/>
</dbReference>
<dbReference type="PANTHER" id="PTHR15184">
    <property type="entry name" value="ATP SYNTHASE"/>
    <property type="match status" value="1"/>
</dbReference>
<dbReference type="PANTHER" id="PTHR15184:SF71">
    <property type="entry name" value="ATP SYNTHASE SUBUNIT BETA, MITOCHONDRIAL"/>
    <property type="match status" value="1"/>
</dbReference>
<dbReference type="Pfam" id="PF00006">
    <property type="entry name" value="ATP-synt_ab"/>
    <property type="match status" value="1"/>
</dbReference>
<dbReference type="Pfam" id="PF02874">
    <property type="entry name" value="ATP-synt_ab_N"/>
    <property type="match status" value="1"/>
</dbReference>
<dbReference type="Pfam" id="PF22919">
    <property type="entry name" value="ATP-synt_VA_C"/>
    <property type="match status" value="1"/>
</dbReference>
<dbReference type="SMART" id="SM00382">
    <property type="entry name" value="AAA"/>
    <property type="match status" value="1"/>
</dbReference>
<dbReference type="SUPFAM" id="SSF47917">
    <property type="entry name" value="C-terminal domain of alpha and beta subunits of F1 ATP synthase"/>
    <property type="match status" value="1"/>
</dbReference>
<dbReference type="SUPFAM" id="SSF50615">
    <property type="entry name" value="N-terminal domain of alpha and beta subunits of F1 ATP synthase"/>
    <property type="match status" value="1"/>
</dbReference>
<dbReference type="SUPFAM" id="SSF52540">
    <property type="entry name" value="P-loop containing nucleoside triphosphate hydrolases"/>
    <property type="match status" value="1"/>
</dbReference>
<dbReference type="PROSITE" id="PS00152">
    <property type="entry name" value="ATPASE_ALPHA_BETA"/>
    <property type="match status" value="1"/>
</dbReference>
<reference key="1">
    <citation type="submission" date="2007-09" db="EMBL/GenBank/DDBJ databases">
        <title>Complete sequence of chromosome of Serratia proteamaculans 568.</title>
        <authorList>
            <consortium name="US DOE Joint Genome Institute"/>
            <person name="Copeland A."/>
            <person name="Lucas S."/>
            <person name="Lapidus A."/>
            <person name="Barry K."/>
            <person name="Glavina del Rio T."/>
            <person name="Dalin E."/>
            <person name="Tice H."/>
            <person name="Pitluck S."/>
            <person name="Chain P."/>
            <person name="Malfatti S."/>
            <person name="Shin M."/>
            <person name="Vergez L."/>
            <person name="Schmutz J."/>
            <person name="Larimer F."/>
            <person name="Land M."/>
            <person name="Hauser L."/>
            <person name="Kyrpides N."/>
            <person name="Kim E."/>
            <person name="Taghavi S."/>
            <person name="Newman L."/>
            <person name="Vangronsveld J."/>
            <person name="van der Lelie D."/>
            <person name="Richardson P."/>
        </authorList>
    </citation>
    <scope>NUCLEOTIDE SEQUENCE [LARGE SCALE GENOMIC DNA]</scope>
    <source>
        <strain>568</strain>
    </source>
</reference>
<feature type="chain" id="PRO_1000067731" description="ATP synthase subunit beta">
    <location>
        <begin position="1"/>
        <end position="460"/>
    </location>
</feature>
<feature type="binding site" evidence="1">
    <location>
        <begin position="150"/>
        <end position="157"/>
    </location>
    <ligand>
        <name>ATP</name>
        <dbReference type="ChEBI" id="CHEBI:30616"/>
    </ligand>
</feature>
<gene>
    <name evidence="1" type="primary">atpD</name>
    <name type="ordered locus">Spro_0008</name>
</gene>
<accession>A8G7M8</accession>
<protein>
    <recommendedName>
        <fullName evidence="1">ATP synthase subunit beta</fullName>
        <ecNumber evidence="1">7.1.2.2</ecNumber>
    </recommendedName>
    <alternativeName>
        <fullName evidence="1">ATP synthase F1 sector subunit beta</fullName>
    </alternativeName>
    <alternativeName>
        <fullName evidence="1">F-ATPase subunit beta</fullName>
    </alternativeName>
</protein>
<keyword id="KW-0066">ATP synthesis</keyword>
<keyword id="KW-0067">ATP-binding</keyword>
<keyword id="KW-0997">Cell inner membrane</keyword>
<keyword id="KW-1003">Cell membrane</keyword>
<keyword id="KW-0139">CF(1)</keyword>
<keyword id="KW-0375">Hydrogen ion transport</keyword>
<keyword id="KW-0406">Ion transport</keyword>
<keyword id="KW-0472">Membrane</keyword>
<keyword id="KW-0547">Nucleotide-binding</keyword>
<keyword id="KW-1278">Translocase</keyword>
<keyword id="KW-0813">Transport</keyword>
<proteinExistence type="inferred from homology"/>
<evidence type="ECO:0000255" key="1">
    <source>
        <dbReference type="HAMAP-Rule" id="MF_01347"/>
    </source>
</evidence>
<sequence>MATGKIIQVIGAVVDVEFPQDAVPKVYNALEVENGANKLVLEVQQQLGGGVVRCIAMGTSDGLRRGLKVTDLDHPIEVPVGKATLGRIMNVLGEPIDMKGDIGEEERWAIHRPAPSYEDLANSQDLLETGIKVMDLICPFAKGGKVGLFGGAGVGKTVNMMELIRNIAIEHSGYSVFAGVGERTREGNDFYHEMNDSNVLDKVSLVYGQMNEPPGNRLRVALTGLTMAEKFRDEGRDVLLFVDNIYRYTLAGTEVSALLGRMPSAVGYQPTLAEEMGVLQERITSTKTGSITSVQAVYVPADDLTDPSPATTFAHLDATVVLSRNIASLGIYPAVDPLDSTSRQLDPLVVGQEHYDVARGVQSILQRYQELKDIIAILGMDELSEEDKLVVSRARKIQRFLSQPFFVAEVFTGSPGKFVSLKDTIRGFKGIMDGDYDHLPEQAFYMVGTIEEAVEKAKKL</sequence>
<name>ATPB_SERP5</name>